<keyword id="KW-0479">Metal-binding</keyword>
<keyword id="KW-0560">Oxidoreductase</keyword>
<keyword id="KW-0862">Zinc</keyword>
<accession>B2HYT2</accession>
<organism>
    <name type="scientific">Acinetobacter baumannii (strain ACICU)</name>
    <dbReference type="NCBI Taxonomy" id="405416"/>
    <lineage>
        <taxon>Bacteria</taxon>
        <taxon>Pseudomonadati</taxon>
        <taxon>Pseudomonadota</taxon>
        <taxon>Gammaproteobacteria</taxon>
        <taxon>Moraxellales</taxon>
        <taxon>Moraxellaceae</taxon>
        <taxon>Acinetobacter</taxon>
        <taxon>Acinetobacter calcoaceticus/baumannii complex</taxon>
    </lineage>
</organism>
<evidence type="ECO:0000255" key="1">
    <source>
        <dbReference type="HAMAP-Rule" id="MF_01400"/>
    </source>
</evidence>
<evidence type="ECO:0000255" key="2">
    <source>
        <dbReference type="PROSITE-ProRule" id="PRU01126"/>
    </source>
</evidence>
<name>MSRB_ACIBC</name>
<sequence length="139" mass="15909">MGKVNKTDREWQRELSPEEYRITRQKGTEPAFTGQYWNTKQHGTYVCRCCGAELFSSDAKYDSGCGWPSFFRPLNGSVIDEHEDLTHGMVRTEIVCHDCEAHLGHVFEDGPQPTGLRYCVNSASLQLKTQEKNDEETYP</sequence>
<gene>
    <name evidence="1" type="primary">msrB</name>
    <name type="ordered locus">ACICU_01507</name>
</gene>
<protein>
    <recommendedName>
        <fullName evidence="1">Peptide methionine sulfoxide reductase MsrB</fullName>
        <ecNumber evidence="1">1.8.4.12</ecNumber>
    </recommendedName>
    <alternativeName>
        <fullName evidence="1">Peptide-methionine (R)-S-oxide reductase</fullName>
    </alternativeName>
</protein>
<reference key="1">
    <citation type="journal article" date="2008" name="Antimicrob. Agents Chemother.">
        <title>Whole-genome pyrosequencing of an epidemic multidrug-resistant Acinetobacter baumannii strain belonging to the European clone II group.</title>
        <authorList>
            <person name="Iacono M."/>
            <person name="Villa L."/>
            <person name="Fortini D."/>
            <person name="Bordoni R."/>
            <person name="Imperi F."/>
            <person name="Bonnal R.J."/>
            <person name="Sicheritz-Ponten T."/>
            <person name="De Bellis G."/>
            <person name="Visca P."/>
            <person name="Cassone A."/>
            <person name="Carattoli A."/>
        </authorList>
    </citation>
    <scope>NUCLEOTIDE SEQUENCE [LARGE SCALE GENOMIC DNA]</scope>
    <source>
        <strain>ACICU</strain>
    </source>
</reference>
<comment type="catalytic activity">
    <reaction evidence="1">
        <text>L-methionyl-[protein] + [thioredoxin]-disulfide + H2O = L-methionyl-(R)-S-oxide-[protein] + [thioredoxin]-dithiol</text>
        <dbReference type="Rhea" id="RHEA:24164"/>
        <dbReference type="Rhea" id="RHEA-COMP:10698"/>
        <dbReference type="Rhea" id="RHEA-COMP:10700"/>
        <dbReference type="Rhea" id="RHEA-COMP:12313"/>
        <dbReference type="Rhea" id="RHEA-COMP:12314"/>
        <dbReference type="ChEBI" id="CHEBI:15377"/>
        <dbReference type="ChEBI" id="CHEBI:16044"/>
        <dbReference type="ChEBI" id="CHEBI:29950"/>
        <dbReference type="ChEBI" id="CHEBI:45764"/>
        <dbReference type="ChEBI" id="CHEBI:50058"/>
        <dbReference type="EC" id="1.8.4.12"/>
    </reaction>
</comment>
<comment type="cofactor">
    <cofactor evidence="1">
        <name>Zn(2+)</name>
        <dbReference type="ChEBI" id="CHEBI:29105"/>
    </cofactor>
    <text evidence="1">Binds 1 zinc ion per subunit. The zinc ion is important for the structural integrity of the protein.</text>
</comment>
<comment type="similarity">
    <text evidence="1">Belongs to the MsrB Met sulfoxide reductase family.</text>
</comment>
<dbReference type="EC" id="1.8.4.12" evidence="1"/>
<dbReference type="EMBL" id="CP000863">
    <property type="protein sequence ID" value="ACC56819.1"/>
    <property type="molecule type" value="Genomic_DNA"/>
</dbReference>
<dbReference type="RefSeq" id="WP_000521160.1">
    <property type="nucleotide sequence ID" value="NZ_CP031380.1"/>
</dbReference>
<dbReference type="SMR" id="B2HYT2"/>
<dbReference type="GeneID" id="92893679"/>
<dbReference type="KEGG" id="abc:ACICU_01507"/>
<dbReference type="HOGENOM" id="CLU_031040_8_5_6"/>
<dbReference type="Proteomes" id="UP000008839">
    <property type="component" value="Chromosome"/>
</dbReference>
<dbReference type="GO" id="GO:0005737">
    <property type="term" value="C:cytoplasm"/>
    <property type="evidence" value="ECO:0007669"/>
    <property type="project" value="TreeGrafter"/>
</dbReference>
<dbReference type="GO" id="GO:0033743">
    <property type="term" value="F:peptide-methionine (R)-S-oxide reductase activity"/>
    <property type="evidence" value="ECO:0007669"/>
    <property type="project" value="UniProtKB-UniRule"/>
</dbReference>
<dbReference type="GO" id="GO:0008270">
    <property type="term" value="F:zinc ion binding"/>
    <property type="evidence" value="ECO:0007669"/>
    <property type="project" value="UniProtKB-UniRule"/>
</dbReference>
<dbReference type="GO" id="GO:0030091">
    <property type="term" value="P:protein repair"/>
    <property type="evidence" value="ECO:0007669"/>
    <property type="project" value="InterPro"/>
</dbReference>
<dbReference type="GO" id="GO:0006979">
    <property type="term" value="P:response to oxidative stress"/>
    <property type="evidence" value="ECO:0007669"/>
    <property type="project" value="InterPro"/>
</dbReference>
<dbReference type="FunFam" id="2.170.150.20:FF:000001">
    <property type="entry name" value="Peptide methionine sulfoxide reductase MsrB"/>
    <property type="match status" value="1"/>
</dbReference>
<dbReference type="Gene3D" id="2.170.150.20">
    <property type="entry name" value="Peptide methionine sulfoxide reductase"/>
    <property type="match status" value="1"/>
</dbReference>
<dbReference type="HAMAP" id="MF_01400">
    <property type="entry name" value="MsrB"/>
    <property type="match status" value="1"/>
</dbReference>
<dbReference type="InterPro" id="IPR028427">
    <property type="entry name" value="Met_Sox_Rdtase_MsrB"/>
</dbReference>
<dbReference type="InterPro" id="IPR002579">
    <property type="entry name" value="Met_Sox_Rdtase_MsrB_dom"/>
</dbReference>
<dbReference type="InterPro" id="IPR011057">
    <property type="entry name" value="Mss4-like_sf"/>
</dbReference>
<dbReference type="NCBIfam" id="TIGR00357">
    <property type="entry name" value="peptide-methionine (R)-S-oxide reductase MsrB"/>
    <property type="match status" value="1"/>
</dbReference>
<dbReference type="PANTHER" id="PTHR10173">
    <property type="entry name" value="METHIONINE SULFOXIDE REDUCTASE"/>
    <property type="match status" value="1"/>
</dbReference>
<dbReference type="PANTHER" id="PTHR10173:SF52">
    <property type="entry name" value="METHIONINE-R-SULFOXIDE REDUCTASE B1"/>
    <property type="match status" value="1"/>
</dbReference>
<dbReference type="Pfam" id="PF01641">
    <property type="entry name" value="SelR"/>
    <property type="match status" value="1"/>
</dbReference>
<dbReference type="SUPFAM" id="SSF51316">
    <property type="entry name" value="Mss4-like"/>
    <property type="match status" value="1"/>
</dbReference>
<dbReference type="PROSITE" id="PS51790">
    <property type="entry name" value="MSRB"/>
    <property type="match status" value="1"/>
</dbReference>
<proteinExistence type="inferred from homology"/>
<feature type="chain" id="PRO_1000145345" description="Peptide methionine sulfoxide reductase MsrB">
    <location>
        <begin position="1"/>
        <end position="139"/>
    </location>
</feature>
<feature type="domain" description="MsrB" evidence="2">
    <location>
        <begin position="8"/>
        <end position="130"/>
    </location>
</feature>
<feature type="active site" description="Nucleophile" evidence="2">
    <location>
        <position position="119"/>
    </location>
</feature>
<feature type="binding site" evidence="2">
    <location>
        <position position="47"/>
    </location>
    <ligand>
        <name>Zn(2+)</name>
        <dbReference type="ChEBI" id="CHEBI:29105"/>
    </ligand>
</feature>
<feature type="binding site" evidence="2">
    <location>
        <position position="50"/>
    </location>
    <ligand>
        <name>Zn(2+)</name>
        <dbReference type="ChEBI" id="CHEBI:29105"/>
    </ligand>
</feature>
<feature type="binding site" evidence="2">
    <location>
        <position position="96"/>
    </location>
    <ligand>
        <name>Zn(2+)</name>
        <dbReference type="ChEBI" id="CHEBI:29105"/>
    </ligand>
</feature>
<feature type="binding site" evidence="2">
    <location>
        <position position="99"/>
    </location>
    <ligand>
        <name>Zn(2+)</name>
        <dbReference type="ChEBI" id="CHEBI:29105"/>
    </ligand>
</feature>